<reference key="1">
    <citation type="submission" date="2008-08" db="EMBL/GenBank/DDBJ databases">
        <title>Complete sequence of Anaeromyxobacter sp. K.</title>
        <authorList>
            <consortium name="US DOE Joint Genome Institute"/>
            <person name="Lucas S."/>
            <person name="Copeland A."/>
            <person name="Lapidus A."/>
            <person name="Glavina del Rio T."/>
            <person name="Dalin E."/>
            <person name="Tice H."/>
            <person name="Bruce D."/>
            <person name="Goodwin L."/>
            <person name="Pitluck S."/>
            <person name="Saunders E."/>
            <person name="Brettin T."/>
            <person name="Detter J.C."/>
            <person name="Han C."/>
            <person name="Larimer F."/>
            <person name="Land M."/>
            <person name="Hauser L."/>
            <person name="Kyrpides N."/>
            <person name="Ovchinnikiva G."/>
            <person name="Beliaev A."/>
        </authorList>
    </citation>
    <scope>NUCLEOTIDE SEQUENCE [LARGE SCALE GENOMIC DNA]</scope>
    <source>
        <strain>K</strain>
    </source>
</reference>
<keyword id="KW-0687">Ribonucleoprotein</keyword>
<keyword id="KW-0689">Ribosomal protein</keyword>
<accession>B4UKG4</accession>
<gene>
    <name evidence="1" type="primary">rpmH</name>
    <name type="ordered locus">AnaeK_4498</name>
</gene>
<comment type="similarity">
    <text evidence="1">Belongs to the bacterial ribosomal protein bL34 family.</text>
</comment>
<dbReference type="EMBL" id="CP001131">
    <property type="protein sequence ID" value="ACG75700.1"/>
    <property type="molecule type" value="Genomic_DNA"/>
</dbReference>
<dbReference type="RefSeq" id="WP_011423406.1">
    <property type="nucleotide sequence ID" value="NC_011145.1"/>
</dbReference>
<dbReference type="SMR" id="B4UKG4"/>
<dbReference type="KEGG" id="ank:AnaeK_4498"/>
<dbReference type="HOGENOM" id="CLU_129938_2_0_7"/>
<dbReference type="OrthoDB" id="9804164at2"/>
<dbReference type="Proteomes" id="UP000001871">
    <property type="component" value="Chromosome"/>
</dbReference>
<dbReference type="GO" id="GO:1990904">
    <property type="term" value="C:ribonucleoprotein complex"/>
    <property type="evidence" value="ECO:0007669"/>
    <property type="project" value="UniProtKB-KW"/>
</dbReference>
<dbReference type="GO" id="GO:0005840">
    <property type="term" value="C:ribosome"/>
    <property type="evidence" value="ECO:0007669"/>
    <property type="project" value="UniProtKB-KW"/>
</dbReference>
<dbReference type="GO" id="GO:0003735">
    <property type="term" value="F:structural constituent of ribosome"/>
    <property type="evidence" value="ECO:0007669"/>
    <property type="project" value="InterPro"/>
</dbReference>
<dbReference type="GO" id="GO:0006412">
    <property type="term" value="P:translation"/>
    <property type="evidence" value="ECO:0007669"/>
    <property type="project" value="UniProtKB-UniRule"/>
</dbReference>
<dbReference type="FunFam" id="1.10.287.3980:FF:000001">
    <property type="entry name" value="Mitochondrial ribosomal protein L34"/>
    <property type="match status" value="1"/>
</dbReference>
<dbReference type="Gene3D" id="1.10.287.3980">
    <property type="match status" value="1"/>
</dbReference>
<dbReference type="HAMAP" id="MF_00391">
    <property type="entry name" value="Ribosomal_bL34"/>
    <property type="match status" value="1"/>
</dbReference>
<dbReference type="InterPro" id="IPR000271">
    <property type="entry name" value="Ribosomal_bL34"/>
</dbReference>
<dbReference type="InterPro" id="IPR020939">
    <property type="entry name" value="Ribosomal_bL34_CS"/>
</dbReference>
<dbReference type="NCBIfam" id="TIGR01030">
    <property type="entry name" value="rpmH_bact"/>
    <property type="match status" value="1"/>
</dbReference>
<dbReference type="PANTHER" id="PTHR14503:SF4">
    <property type="entry name" value="LARGE RIBOSOMAL SUBUNIT PROTEIN BL34M"/>
    <property type="match status" value="1"/>
</dbReference>
<dbReference type="PANTHER" id="PTHR14503">
    <property type="entry name" value="MITOCHONDRIAL RIBOSOMAL PROTEIN 34 FAMILY MEMBER"/>
    <property type="match status" value="1"/>
</dbReference>
<dbReference type="Pfam" id="PF00468">
    <property type="entry name" value="Ribosomal_L34"/>
    <property type="match status" value="1"/>
</dbReference>
<dbReference type="PROSITE" id="PS00784">
    <property type="entry name" value="RIBOSOMAL_L34"/>
    <property type="match status" value="1"/>
</dbReference>
<sequence>MKRTYQPKKQRRNRTHGFLKRSKTPGGRNVLKSRRAKGRKRLTTRAPKK</sequence>
<evidence type="ECO:0000255" key="1">
    <source>
        <dbReference type="HAMAP-Rule" id="MF_00391"/>
    </source>
</evidence>
<evidence type="ECO:0000256" key="2">
    <source>
        <dbReference type="SAM" id="MobiDB-lite"/>
    </source>
</evidence>
<evidence type="ECO:0000305" key="3"/>
<name>RL34_ANASK</name>
<organism>
    <name type="scientific">Anaeromyxobacter sp. (strain K)</name>
    <dbReference type="NCBI Taxonomy" id="447217"/>
    <lineage>
        <taxon>Bacteria</taxon>
        <taxon>Pseudomonadati</taxon>
        <taxon>Myxococcota</taxon>
        <taxon>Myxococcia</taxon>
        <taxon>Myxococcales</taxon>
        <taxon>Cystobacterineae</taxon>
        <taxon>Anaeromyxobacteraceae</taxon>
        <taxon>Anaeromyxobacter</taxon>
    </lineage>
</organism>
<protein>
    <recommendedName>
        <fullName evidence="1">Large ribosomal subunit protein bL34</fullName>
    </recommendedName>
    <alternativeName>
        <fullName evidence="3">50S ribosomal protein L34</fullName>
    </alternativeName>
</protein>
<feature type="chain" id="PRO_1000122890" description="Large ribosomal subunit protein bL34">
    <location>
        <begin position="1"/>
        <end position="49"/>
    </location>
</feature>
<feature type="region of interest" description="Disordered" evidence="2">
    <location>
        <begin position="1"/>
        <end position="49"/>
    </location>
</feature>
<feature type="compositionally biased region" description="Basic residues" evidence="2">
    <location>
        <begin position="1"/>
        <end position="23"/>
    </location>
</feature>
<feature type="compositionally biased region" description="Basic residues" evidence="2">
    <location>
        <begin position="31"/>
        <end position="49"/>
    </location>
</feature>
<proteinExistence type="inferred from homology"/>